<accession>Q5RE99</accession>
<keyword id="KW-0175">Coiled coil</keyword>
<keyword id="KW-0963">Cytoplasm</keyword>
<keyword id="KW-0472">Membrane</keyword>
<keyword id="KW-0496">Mitochondrion</keyword>
<keyword id="KW-1185">Reference proteome</keyword>
<keyword id="KW-0812">Transmembrane</keyword>
<keyword id="KW-1133">Transmembrane helix</keyword>
<reference key="1">
    <citation type="submission" date="2004-11" db="EMBL/GenBank/DDBJ databases">
        <authorList>
            <consortium name="The German cDNA consortium"/>
        </authorList>
    </citation>
    <scope>NUCLEOTIDE SEQUENCE [LARGE SCALE MRNA]</scope>
    <source>
        <tissue>Brain cortex</tissue>
    </source>
</reference>
<name>F210A_PONAB</name>
<organism>
    <name type="scientific">Pongo abelii</name>
    <name type="common">Sumatran orangutan</name>
    <name type="synonym">Pongo pygmaeus abelii</name>
    <dbReference type="NCBI Taxonomy" id="9601"/>
    <lineage>
        <taxon>Eukaryota</taxon>
        <taxon>Metazoa</taxon>
        <taxon>Chordata</taxon>
        <taxon>Craniata</taxon>
        <taxon>Vertebrata</taxon>
        <taxon>Euteleostomi</taxon>
        <taxon>Mammalia</taxon>
        <taxon>Eutheria</taxon>
        <taxon>Euarchontoglires</taxon>
        <taxon>Primates</taxon>
        <taxon>Haplorrhini</taxon>
        <taxon>Catarrhini</taxon>
        <taxon>Hominidae</taxon>
        <taxon>Pongo</taxon>
    </lineage>
</organism>
<feature type="chain" id="PRO_0000274426" description="Protein FAM210A">
    <location>
        <begin position="1"/>
        <end position="272"/>
    </location>
</feature>
<feature type="transmembrane region" description="Helical" evidence="3">
    <location>
        <begin position="136"/>
        <end position="156"/>
    </location>
</feature>
<feature type="domain" description="DUF1279">
    <location>
        <begin position="117"/>
        <end position="229"/>
    </location>
</feature>
<feature type="region of interest" description="Disordered" evidence="4">
    <location>
        <begin position="246"/>
        <end position="272"/>
    </location>
</feature>
<feature type="coiled-coil region" evidence="3">
    <location>
        <begin position="229"/>
        <end position="271"/>
    </location>
</feature>
<gene>
    <name type="primary">FAM210A</name>
</gene>
<evidence type="ECO:0000250" key="1">
    <source>
        <dbReference type="UniProtKB" id="Q8BGY7"/>
    </source>
</evidence>
<evidence type="ECO:0000250" key="2">
    <source>
        <dbReference type="UniProtKB" id="Q96ND0"/>
    </source>
</evidence>
<evidence type="ECO:0000255" key="3"/>
<evidence type="ECO:0000256" key="4">
    <source>
        <dbReference type="SAM" id="MobiDB-lite"/>
    </source>
</evidence>
<evidence type="ECO:0000305" key="5"/>
<protein>
    <recommendedName>
        <fullName>Protein FAM210A</fullName>
    </recommendedName>
</protein>
<comment type="function">
    <text evidence="1">May play a role in the structure and strength of both muscle and bone.</text>
</comment>
<comment type="subunit">
    <text evidence="2">Interacts with ATAD3A.</text>
</comment>
<comment type="subcellular location">
    <subcellularLocation>
        <location evidence="5">Membrane</location>
        <topology evidence="5">Single-pass membrane protein</topology>
    </subcellularLocation>
    <subcellularLocation>
        <location evidence="1">Mitochondrion</location>
    </subcellularLocation>
    <subcellularLocation>
        <location evidence="1">Cytoplasm</location>
    </subcellularLocation>
</comment>
<comment type="similarity">
    <text evidence="5">Belongs to the FAM210 family.</text>
</comment>
<sequence length="272" mass="30785">MQWNVPRTVSRLARRTCLEPHNAGLFGRCQNVKGPLLLYNAESKAVLVQGSQKQWLHLSAAQCVAKERRPLDAHPPQPGVLRHKQGKQHVSFRRVFSSNATAQGTPEKKEEPDPLQDKSISLYQRFKKTFRQYGKVLIPVHLITSGVWFGTFYYAALKGVNVVPFLELIGLPDSVVSILKNSQSGNALTAYALFKIATPARYTVTLGGTSVTVKYLRSHGYMSTPPPVKEYLQDRMEETKELITEKMEETKDRLTEKLQETKEKVSFKKKVE</sequence>
<proteinExistence type="evidence at transcript level"/>
<dbReference type="EMBL" id="CR857634">
    <property type="protein sequence ID" value="CAH89908.1"/>
    <property type="molecule type" value="mRNA"/>
</dbReference>
<dbReference type="RefSeq" id="NP_001124894.1">
    <property type="nucleotide sequence ID" value="NM_001131422.1"/>
</dbReference>
<dbReference type="SMR" id="Q5RE99"/>
<dbReference type="FunCoup" id="Q5RE99">
    <property type="interactions" value="1395"/>
</dbReference>
<dbReference type="STRING" id="9601.ENSPPYP00000010075"/>
<dbReference type="GeneID" id="100171760"/>
<dbReference type="KEGG" id="pon:100171760"/>
<dbReference type="CTD" id="125228"/>
<dbReference type="eggNOG" id="KOG4082">
    <property type="taxonomic scope" value="Eukaryota"/>
</dbReference>
<dbReference type="InParanoid" id="Q5RE99"/>
<dbReference type="OrthoDB" id="5874039at2759"/>
<dbReference type="Proteomes" id="UP000001595">
    <property type="component" value="Unplaced"/>
</dbReference>
<dbReference type="GO" id="GO:0005737">
    <property type="term" value="C:cytoplasm"/>
    <property type="evidence" value="ECO:0000250"/>
    <property type="project" value="UniProtKB"/>
</dbReference>
<dbReference type="GO" id="GO:0016020">
    <property type="term" value="C:membrane"/>
    <property type="evidence" value="ECO:0007669"/>
    <property type="project" value="UniProtKB-SubCell"/>
</dbReference>
<dbReference type="GO" id="GO:0005739">
    <property type="term" value="C:mitochondrion"/>
    <property type="evidence" value="ECO:0000250"/>
    <property type="project" value="UniProtKB"/>
</dbReference>
<dbReference type="Gene3D" id="6.10.140.1430">
    <property type="match status" value="1"/>
</dbReference>
<dbReference type="InterPro" id="IPR045866">
    <property type="entry name" value="FAM210A/B-like"/>
</dbReference>
<dbReference type="InterPro" id="IPR009688">
    <property type="entry name" value="FAM210A/B-like_dom"/>
</dbReference>
<dbReference type="PANTHER" id="PTHR21377:SF1">
    <property type="entry name" value="PROTEIN FAM210A"/>
    <property type="match status" value="1"/>
</dbReference>
<dbReference type="PANTHER" id="PTHR21377">
    <property type="entry name" value="PROTEIN FAM210B, MITOCHONDRIAL"/>
    <property type="match status" value="1"/>
</dbReference>
<dbReference type="Pfam" id="PF06916">
    <property type="entry name" value="FAM210A-B_dom"/>
    <property type="match status" value="1"/>
</dbReference>